<proteinExistence type="inferred from homology"/>
<sequence>MPIKIPDDLPARPILEQEGVVVMRRTDAVRQDIRPLRIGLLNLMPNKISTETQLARLLGATPLQVELTLVRMTDHVARHTPADHMAAFYRPWAEVRDERFDGFVITGAPVEHLPFEEVGYWPELCRVLDWTQTHVHSSFTICWAAQAALHHFHGVPKHLLPAKAFGLFRHRNLAPASPYLRGFSDDPHIPVSRWAEIRQADIPAGSGLETLLDSAETGPCLLDDPAHRSLHMFNHVEYDTRSLADEYFRDGQGPLPAGYFPGDDPARPPENRWRGHAHLLFGNWINEIYRTTPFDIAAIGGGRPPANDAGPIEAAAG</sequence>
<evidence type="ECO:0000255" key="1">
    <source>
        <dbReference type="HAMAP-Rule" id="MF_00295"/>
    </source>
</evidence>
<keyword id="KW-0012">Acyltransferase</keyword>
<keyword id="KW-0028">Amino-acid biosynthesis</keyword>
<keyword id="KW-0963">Cytoplasm</keyword>
<keyword id="KW-0486">Methionine biosynthesis</keyword>
<keyword id="KW-1185">Reference proteome</keyword>
<keyword id="KW-0808">Transferase</keyword>
<name>METAA_RHIWR</name>
<accession>A5V3T8</accession>
<organism>
    <name type="scientific">Rhizorhabdus wittichii (strain DSM 6014 / CCUG 31198 / JCM 15750 / NBRC 105917 / EY 4224 / RW1)</name>
    <name type="common">Sphingomonas wittichii</name>
    <dbReference type="NCBI Taxonomy" id="392499"/>
    <lineage>
        <taxon>Bacteria</taxon>
        <taxon>Pseudomonadati</taxon>
        <taxon>Pseudomonadota</taxon>
        <taxon>Alphaproteobacteria</taxon>
        <taxon>Sphingomonadales</taxon>
        <taxon>Sphingomonadaceae</taxon>
        <taxon>Rhizorhabdus</taxon>
    </lineage>
</organism>
<reference key="1">
    <citation type="journal article" date="2010" name="J. Bacteriol.">
        <title>Genome sequence of the dioxin-mineralizing bacterium Sphingomonas wittichii RW1.</title>
        <authorList>
            <person name="Miller T.R."/>
            <person name="Delcher A.L."/>
            <person name="Salzberg S.L."/>
            <person name="Saunders E."/>
            <person name="Detter J.C."/>
            <person name="Halden R.U."/>
        </authorList>
    </citation>
    <scope>NUCLEOTIDE SEQUENCE [LARGE SCALE GENOMIC DNA]</scope>
    <source>
        <strain>DSM 6014 / CCUG 31198 / JCM 15750 / NBRC 105917 / EY 4224 / RW1</strain>
    </source>
</reference>
<protein>
    <recommendedName>
        <fullName evidence="1">Homoserine O-acetyltransferase</fullName>
        <shortName evidence="1">HAT</shortName>
        <ecNumber evidence="1">2.3.1.31</ecNumber>
    </recommendedName>
    <alternativeName>
        <fullName evidence="1">Homoserine transacetylase</fullName>
        <shortName evidence="1">HTA</shortName>
    </alternativeName>
</protein>
<comment type="function">
    <text evidence="1">Transfers an acetyl group from acetyl-CoA to L-homoserine, forming acetyl-L-homoserine.</text>
</comment>
<comment type="catalytic activity">
    <reaction evidence="1">
        <text>L-homoserine + acetyl-CoA = O-acetyl-L-homoserine + CoA</text>
        <dbReference type="Rhea" id="RHEA:13701"/>
        <dbReference type="ChEBI" id="CHEBI:57287"/>
        <dbReference type="ChEBI" id="CHEBI:57288"/>
        <dbReference type="ChEBI" id="CHEBI:57476"/>
        <dbReference type="ChEBI" id="CHEBI:57716"/>
        <dbReference type="EC" id="2.3.1.31"/>
    </reaction>
</comment>
<comment type="pathway">
    <text evidence="1">Amino-acid biosynthesis; L-methionine biosynthesis via de novo pathway; O-acetyl-L-homoserine from L-homoserine: step 1/1.</text>
</comment>
<comment type="subcellular location">
    <subcellularLocation>
        <location evidence="1">Cytoplasm</location>
    </subcellularLocation>
</comment>
<comment type="similarity">
    <text evidence="1">Belongs to the MetA family.</text>
</comment>
<feature type="chain" id="PRO_1000021850" description="Homoserine O-acetyltransferase">
    <location>
        <begin position="1"/>
        <end position="317"/>
    </location>
</feature>
<feature type="active site" description="Acyl-thioester intermediate" evidence="1">
    <location>
        <position position="142"/>
    </location>
</feature>
<feature type="active site" description="Proton acceptor" evidence="1">
    <location>
        <position position="235"/>
    </location>
</feature>
<feature type="active site" evidence="1">
    <location>
        <position position="237"/>
    </location>
</feature>
<feature type="binding site" evidence="1">
    <location>
        <position position="163"/>
    </location>
    <ligand>
        <name>substrate</name>
    </ligand>
</feature>
<feature type="binding site" evidence="1">
    <location>
        <position position="192"/>
    </location>
    <ligand>
        <name>substrate</name>
    </ligand>
</feature>
<feature type="binding site" evidence="1">
    <location>
        <position position="249"/>
    </location>
    <ligand>
        <name>substrate</name>
    </ligand>
</feature>
<feature type="site" description="Important for acyl-CoA specificity" evidence="1">
    <location>
        <position position="111"/>
    </location>
</feature>
<feature type="site" description="Important for substrate specificity" evidence="1">
    <location>
        <position position="192"/>
    </location>
</feature>
<gene>
    <name evidence="1" type="primary">metAA</name>
    <name type="ordered locus">Swit_0586</name>
</gene>
<dbReference type="EC" id="2.3.1.31" evidence="1"/>
<dbReference type="EMBL" id="CP000699">
    <property type="protein sequence ID" value="ABQ66954.1"/>
    <property type="molecule type" value="Genomic_DNA"/>
</dbReference>
<dbReference type="SMR" id="A5V3T8"/>
<dbReference type="STRING" id="392499.Swit_0586"/>
<dbReference type="PaxDb" id="392499-Swit_0586"/>
<dbReference type="KEGG" id="swi:Swit_0586"/>
<dbReference type="eggNOG" id="COG1897">
    <property type="taxonomic scope" value="Bacteria"/>
</dbReference>
<dbReference type="HOGENOM" id="CLU_057851_0_1_5"/>
<dbReference type="OrthoDB" id="9772423at2"/>
<dbReference type="UniPathway" id="UPA00051">
    <property type="reaction ID" value="UER00074"/>
</dbReference>
<dbReference type="Proteomes" id="UP000001989">
    <property type="component" value="Chromosome"/>
</dbReference>
<dbReference type="GO" id="GO:0005737">
    <property type="term" value="C:cytoplasm"/>
    <property type="evidence" value="ECO:0007669"/>
    <property type="project" value="UniProtKB-SubCell"/>
</dbReference>
<dbReference type="GO" id="GO:0004414">
    <property type="term" value="F:homoserine O-acetyltransferase activity"/>
    <property type="evidence" value="ECO:0007669"/>
    <property type="project" value="UniProtKB-EC"/>
</dbReference>
<dbReference type="GO" id="GO:0008899">
    <property type="term" value="F:homoserine O-succinyltransferase activity"/>
    <property type="evidence" value="ECO:0007669"/>
    <property type="project" value="UniProtKB-UniRule"/>
</dbReference>
<dbReference type="GO" id="GO:0019281">
    <property type="term" value="P:L-methionine biosynthetic process from homoserine via O-succinyl-L-homoserine and cystathionine"/>
    <property type="evidence" value="ECO:0007669"/>
    <property type="project" value="InterPro"/>
</dbReference>
<dbReference type="CDD" id="cd03131">
    <property type="entry name" value="GATase1_HTS"/>
    <property type="match status" value="1"/>
</dbReference>
<dbReference type="Gene3D" id="3.40.50.880">
    <property type="match status" value="1"/>
</dbReference>
<dbReference type="HAMAP" id="MF_00295">
    <property type="entry name" value="MetA_acyltransf"/>
    <property type="match status" value="1"/>
</dbReference>
<dbReference type="InterPro" id="IPR029062">
    <property type="entry name" value="Class_I_gatase-like"/>
</dbReference>
<dbReference type="InterPro" id="IPR005697">
    <property type="entry name" value="HST_MetA"/>
</dbReference>
<dbReference type="InterPro" id="IPR033752">
    <property type="entry name" value="MetA_family"/>
</dbReference>
<dbReference type="NCBIfam" id="TIGR01001">
    <property type="entry name" value="metA"/>
    <property type="match status" value="1"/>
</dbReference>
<dbReference type="PANTHER" id="PTHR20919">
    <property type="entry name" value="HOMOSERINE O-SUCCINYLTRANSFERASE"/>
    <property type="match status" value="1"/>
</dbReference>
<dbReference type="PANTHER" id="PTHR20919:SF0">
    <property type="entry name" value="HOMOSERINE O-SUCCINYLTRANSFERASE"/>
    <property type="match status" value="1"/>
</dbReference>
<dbReference type="Pfam" id="PF04204">
    <property type="entry name" value="HTS"/>
    <property type="match status" value="1"/>
</dbReference>
<dbReference type="PIRSF" id="PIRSF000450">
    <property type="entry name" value="H_ser_succinyltr"/>
    <property type="match status" value="1"/>
</dbReference>
<dbReference type="SUPFAM" id="SSF52317">
    <property type="entry name" value="Class I glutamine amidotransferase-like"/>
    <property type="match status" value="1"/>
</dbReference>